<keyword id="KW-0067">ATP-binding</keyword>
<keyword id="KW-0963">Cytoplasm</keyword>
<keyword id="KW-0418">Kinase</keyword>
<keyword id="KW-0547">Nucleotide-binding</keyword>
<keyword id="KW-1185">Reference proteome</keyword>
<keyword id="KW-0808">Transferase</keyword>
<gene>
    <name evidence="1" type="primary">gmk</name>
    <name type="ordered locus">HH_0707</name>
</gene>
<evidence type="ECO:0000255" key="1">
    <source>
        <dbReference type="HAMAP-Rule" id="MF_00328"/>
    </source>
</evidence>
<reference key="1">
    <citation type="journal article" date="2003" name="Proc. Natl. Acad. Sci. U.S.A.">
        <title>The complete genome sequence of the carcinogenic bacterium Helicobacter hepaticus.</title>
        <authorList>
            <person name="Suerbaum S."/>
            <person name="Josenhans C."/>
            <person name="Sterzenbach T."/>
            <person name="Drescher B."/>
            <person name="Brandt P."/>
            <person name="Bell M."/>
            <person name="Droege M."/>
            <person name="Fartmann B."/>
            <person name="Fischer H.-P."/>
            <person name="Ge Z."/>
            <person name="Hoerster A."/>
            <person name="Holland R."/>
            <person name="Klein K."/>
            <person name="Koenig J."/>
            <person name="Macko L."/>
            <person name="Mendz G.L."/>
            <person name="Nyakatura G."/>
            <person name="Schauer D.B."/>
            <person name="Shen Z."/>
            <person name="Weber J."/>
            <person name="Frosch M."/>
            <person name="Fox J.G."/>
        </authorList>
    </citation>
    <scope>NUCLEOTIDE SEQUENCE [LARGE SCALE GENOMIC DNA]</scope>
    <source>
        <strain>ATCC 51449 / 3B1</strain>
    </source>
</reference>
<feature type="chain" id="PRO_0000170546" description="Guanylate kinase">
    <location>
        <begin position="1"/>
        <end position="200"/>
    </location>
</feature>
<feature type="domain" description="Guanylate kinase-like" evidence="1">
    <location>
        <begin position="4"/>
        <end position="183"/>
    </location>
</feature>
<feature type="binding site" evidence="1">
    <location>
        <begin position="11"/>
        <end position="18"/>
    </location>
    <ligand>
        <name>ATP</name>
        <dbReference type="ChEBI" id="CHEBI:30616"/>
    </ligand>
</feature>
<name>KGUA_HELHP</name>
<sequence>MSKGAVLIISGPSGCGKSTLTKSLIESIPNVYFSISTTTRPMREGETDGVHYHFVSKEHFLQDIHNNVFLEWAEVHTNFYGTSLKPVQQALEQDKIVLFDVDVQGHHSIKEYFGDFAKSVFITTKNKDILRERLISRQTDDLQTIEFRLIQAHNEMQHIHNFDYLIINDDITTAKEAMVAIARSLKYQQIERLSKIIQKW</sequence>
<accession>Q7VIA1</accession>
<dbReference type="EC" id="2.7.4.8" evidence="1"/>
<dbReference type="EMBL" id="AE017125">
    <property type="protein sequence ID" value="AAP77304.1"/>
    <property type="molecule type" value="Genomic_DNA"/>
</dbReference>
<dbReference type="RefSeq" id="WP_011115549.1">
    <property type="nucleotide sequence ID" value="NC_004917.1"/>
</dbReference>
<dbReference type="SMR" id="Q7VIA1"/>
<dbReference type="STRING" id="235279.HH_0707"/>
<dbReference type="KEGG" id="hhe:HH_0707"/>
<dbReference type="eggNOG" id="COG0194">
    <property type="taxonomic scope" value="Bacteria"/>
</dbReference>
<dbReference type="HOGENOM" id="CLU_001715_1_2_7"/>
<dbReference type="OrthoDB" id="9808150at2"/>
<dbReference type="Proteomes" id="UP000002495">
    <property type="component" value="Chromosome"/>
</dbReference>
<dbReference type="GO" id="GO:0005829">
    <property type="term" value="C:cytosol"/>
    <property type="evidence" value="ECO:0007669"/>
    <property type="project" value="TreeGrafter"/>
</dbReference>
<dbReference type="GO" id="GO:0005524">
    <property type="term" value="F:ATP binding"/>
    <property type="evidence" value="ECO:0007669"/>
    <property type="project" value="UniProtKB-UniRule"/>
</dbReference>
<dbReference type="GO" id="GO:0004385">
    <property type="term" value="F:guanylate kinase activity"/>
    <property type="evidence" value="ECO:0007669"/>
    <property type="project" value="UniProtKB-UniRule"/>
</dbReference>
<dbReference type="CDD" id="cd00071">
    <property type="entry name" value="GMPK"/>
    <property type="match status" value="1"/>
</dbReference>
<dbReference type="FunFam" id="3.30.63.10:FF:000002">
    <property type="entry name" value="Guanylate kinase 1"/>
    <property type="match status" value="1"/>
</dbReference>
<dbReference type="Gene3D" id="3.30.63.10">
    <property type="entry name" value="Guanylate Kinase phosphate binding domain"/>
    <property type="match status" value="1"/>
</dbReference>
<dbReference type="Gene3D" id="3.40.50.300">
    <property type="entry name" value="P-loop containing nucleotide triphosphate hydrolases"/>
    <property type="match status" value="1"/>
</dbReference>
<dbReference type="HAMAP" id="MF_00328">
    <property type="entry name" value="Guanylate_kinase"/>
    <property type="match status" value="1"/>
</dbReference>
<dbReference type="InterPro" id="IPR008145">
    <property type="entry name" value="GK/Ca_channel_bsu"/>
</dbReference>
<dbReference type="InterPro" id="IPR008144">
    <property type="entry name" value="Guanylate_kin-like_dom"/>
</dbReference>
<dbReference type="InterPro" id="IPR017665">
    <property type="entry name" value="Guanylate_kinase"/>
</dbReference>
<dbReference type="InterPro" id="IPR020590">
    <property type="entry name" value="Guanylate_kinase_CS"/>
</dbReference>
<dbReference type="InterPro" id="IPR027417">
    <property type="entry name" value="P-loop_NTPase"/>
</dbReference>
<dbReference type="NCBIfam" id="TIGR03263">
    <property type="entry name" value="guanyl_kin"/>
    <property type="match status" value="1"/>
</dbReference>
<dbReference type="PANTHER" id="PTHR23117:SF13">
    <property type="entry name" value="GUANYLATE KINASE"/>
    <property type="match status" value="1"/>
</dbReference>
<dbReference type="PANTHER" id="PTHR23117">
    <property type="entry name" value="GUANYLATE KINASE-RELATED"/>
    <property type="match status" value="1"/>
</dbReference>
<dbReference type="Pfam" id="PF00625">
    <property type="entry name" value="Guanylate_kin"/>
    <property type="match status" value="1"/>
</dbReference>
<dbReference type="SMART" id="SM00072">
    <property type="entry name" value="GuKc"/>
    <property type="match status" value="1"/>
</dbReference>
<dbReference type="SUPFAM" id="SSF52540">
    <property type="entry name" value="P-loop containing nucleoside triphosphate hydrolases"/>
    <property type="match status" value="1"/>
</dbReference>
<dbReference type="PROSITE" id="PS00856">
    <property type="entry name" value="GUANYLATE_KINASE_1"/>
    <property type="match status" value="1"/>
</dbReference>
<dbReference type="PROSITE" id="PS50052">
    <property type="entry name" value="GUANYLATE_KINASE_2"/>
    <property type="match status" value="1"/>
</dbReference>
<protein>
    <recommendedName>
        <fullName evidence="1">Guanylate kinase</fullName>
        <ecNumber evidence="1">2.7.4.8</ecNumber>
    </recommendedName>
    <alternativeName>
        <fullName evidence="1">GMP kinase</fullName>
    </alternativeName>
</protein>
<comment type="function">
    <text evidence="1">Essential for recycling GMP and indirectly, cGMP.</text>
</comment>
<comment type="catalytic activity">
    <reaction evidence="1">
        <text>GMP + ATP = GDP + ADP</text>
        <dbReference type="Rhea" id="RHEA:20780"/>
        <dbReference type="ChEBI" id="CHEBI:30616"/>
        <dbReference type="ChEBI" id="CHEBI:58115"/>
        <dbReference type="ChEBI" id="CHEBI:58189"/>
        <dbReference type="ChEBI" id="CHEBI:456216"/>
        <dbReference type="EC" id="2.7.4.8"/>
    </reaction>
</comment>
<comment type="subcellular location">
    <subcellularLocation>
        <location evidence="1">Cytoplasm</location>
    </subcellularLocation>
</comment>
<comment type="similarity">
    <text evidence="1">Belongs to the guanylate kinase family.</text>
</comment>
<organism>
    <name type="scientific">Helicobacter hepaticus (strain ATCC 51449 / 3B1)</name>
    <dbReference type="NCBI Taxonomy" id="235279"/>
    <lineage>
        <taxon>Bacteria</taxon>
        <taxon>Pseudomonadati</taxon>
        <taxon>Campylobacterota</taxon>
        <taxon>Epsilonproteobacteria</taxon>
        <taxon>Campylobacterales</taxon>
        <taxon>Helicobacteraceae</taxon>
        <taxon>Helicobacter</taxon>
    </lineage>
</organism>
<proteinExistence type="inferred from homology"/>